<reference key="1">
    <citation type="journal article" date="2005" name="Nature">
        <title>Sequencing of Aspergillus nidulans and comparative analysis with A. fumigatus and A. oryzae.</title>
        <authorList>
            <person name="Galagan J.E."/>
            <person name="Calvo S.E."/>
            <person name="Cuomo C."/>
            <person name="Ma L.-J."/>
            <person name="Wortman J.R."/>
            <person name="Batzoglou S."/>
            <person name="Lee S.-I."/>
            <person name="Bastuerkmen M."/>
            <person name="Spevak C.C."/>
            <person name="Clutterbuck J."/>
            <person name="Kapitonov V."/>
            <person name="Jurka J."/>
            <person name="Scazzocchio C."/>
            <person name="Farman M.L."/>
            <person name="Butler J."/>
            <person name="Purcell S."/>
            <person name="Harris S."/>
            <person name="Braus G.H."/>
            <person name="Draht O."/>
            <person name="Busch S."/>
            <person name="D'Enfert C."/>
            <person name="Bouchier C."/>
            <person name="Goldman G.H."/>
            <person name="Bell-Pedersen D."/>
            <person name="Griffiths-Jones S."/>
            <person name="Doonan J.H."/>
            <person name="Yu J."/>
            <person name="Vienken K."/>
            <person name="Pain A."/>
            <person name="Freitag M."/>
            <person name="Selker E.U."/>
            <person name="Archer D.B."/>
            <person name="Penalva M.A."/>
            <person name="Oakley B.R."/>
            <person name="Momany M."/>
            <person name="Tanaka T."/>
            <person name="Kumagai T."/>
            <person name="Asai K."/>
            <person name="Machida M."/>
            <person name="Nierman W.C."/>
            <person name="Denning D.W."/>
            <person name="Caddick M.X."/>
            <person name="Hynes M."/>
            <person name="Paoletti M."/>
            <person name="Fischer R."/>
            <person name="Miller B.L."/>
            <person name="Dyer P.S."/>
            <person name="Sachs M.S."/>
            <person name="Osmani S.A."/>
            <person name="Birren B.W."/>
        </authorList>
    </citation>
    <scope>NUCLEOTIDE SEQUENCE [LARGE SCALE GENOMIC DNA]</scope>
    <source>
        <strain>FGSC A4 / ATCC 38163 / CBS 112.46 / NRRL 194 / M139</strain>
    </source>
</reference>
<reference key="2">
    <citation type="journal article" date="2009" name="Fungal Genet. Biol.">
        <title>The 2008 update of the Aspergillus nidulans genome annotation: a community effort.</title>
        <authorList>
            <person name="Wortman J.R."/>
            <person name="Gilsenan J.M."/>
            <person name="Joardar V."/>
            <person name="Deegan J."/>
            <person name="Clutterbuck J."/>
            <person name="Andersen M.R."/>
            <person name="Archer D."/>
            <person name="Bencina M."/>
            <person name="Braus G."/>
            <person name="Coutinho P."/>
            <person name="von Dohren H."/>
            <person name="Doonan J."/>
            <person name="Driessen A.J."/>
            <person name="Durek P."/>
            <person name="Espeso E."/>
            <person name="Fekete E."/>
            <person name="Flipphi M."/>
            <person name="Estrada C.G."/>
            <person name="Geysens S."/>
            <person name="Goldman G."/>
            <person name="de Groot P.W."/>
            <person name="Hansen K."/>
            <person name="Harris S.D."/>
            <person name="Heinekamp T."/>
            <person name="Helmstaedt K."/>
            <person name="Henrissat B."/>
            <person name="Hofmann G."/>
            <person name="Homan T."/>
            <person name="Horio T."/>
            <person name="Horiuchi H."/>
            <person name="James S."/>
            <person name="Jones M."/>
            <person name="Karaffa L."/>
            <person name="Karanyi Z."/>
            <person name="Kato M."/>
            <person name="Keller N."/>
            <person name="Kelly D.E."/>
            <person name="Kiel J.A."/>
            <person name="Kim J.M."/>
            <person name="van der Klei I.J."/>
            <person name="Klis F.M."/>
            <person name="Kovalchuk A."/>
            <person name="Krasevec N."/>
            <person name="Kubicek C.P."/>
            <person name="Liu B."/>
            <person name="Maccabe A."/>
            <person name="Meyer V."/>
            <person name="Mirabito P."/>
            <person name="Miskei M."/>
            <person name="Mos M."/>
            <person name="Mullins J."/>
            <person name="Nelson D.R."/>
            <person name="Nielsen J."/>
            <person name="Oakley B.R."/>
            <person name="Osmani S.A."/>
            <person name="Pakula T."/>
            <person name="Paszewski A."/>
            <person name="Paulsen I."/>
            <person name="Pilsyk S."/>
            <person name="Pocsi I."/>
            <person name="Punt P.J."/>
            <person name="Ram A.F."/>
            <person name="Ren Q."/>
            <person name="Robellet X."/>
            <person name="Robson G."/>
            <person name="Seiboth B."/>
            <person name="van Solingen P."/>
            <person name="Specht T."/>
            <person name="Sun J."/>
            <person name="Taheri-Talesh N."/>
            <person name="Takeshita N."/>
            <person name="Ussery D."/>
            <person name="vanKuyk P.A."/>
            <person name="Visser H."/>
            <person name="van de Vondervoort P.J."/>
            <person name="de Vries R.P."/>
            <person name="Walton J."/>
            <person name="Xiang X."/>
            <person name="Xiong Y."/>
            <person name="Zeng A.P."/>
            <person name="Brandt B.W."/>
            <person name="Cornell M.J."/>
            <person name="van den Hondel C.A."/>
            <person name="Visser J."/>
            <person name="Oliver S.G."/>
            <person name="Turner G."/>
        </authorList>
    </citation>
    <scope>GENOME REANNOTATION</scope>
    <source>
        <strain>FGSC A4 / ATCC 38163 / CBS 112.46 / NRRL 194 / M139</strain>
    </source>
</reference>
<organism>
    <name type="scientific">Emericella nidulans (strain FGSC A4 / ATCC 38163 / CBS 112.46 / NRRL 194 / M139)</name>
    <name type="common">Aspergillus nidulans</name>
    <dbReference type="NCBI Taxonomy" id="227321"/>
    <lineage>
        <taxon>Eukaryota</taxon>
        <taxon>Fungi</taxon>
        <taxon>Dikarya</taxon>
        <taxon>Ascomycota</taxon>
        <taxon>Pezizomycotina</taxon>
        <taxon>Eurotiomycetes</taxon>
        <taxon>Eurotiomycetidae</taxon>
        <taxon>Eurotiales</taxon>
        <taxon>Aspergillaceae</taxon>
        <taxon>Aspergillus</taxon>
        <taxon>Aspergillus subgen. Nidulantes</taxon>
    </lineage>
</organism>
<comment type="function">
    <text evidence="1">Mitochondrial GTPase involved in mitochondrial trafficking. Probably involved in control of anterograde transport of mitochondria and their subcellular distribution.</text>
</comment>
<comment type="subcellular location">
    <subcellularLocation>
        <location evidence="1">Mitochondrion outer membrane</location>
        <topology evidence="1">Single-pass type IV membrane protein</topology>
    </subcellularLocation>
</comment>
<comment type="similarity">
    <text evidence="4 6">Belongs to the mitochondrial Rho GTPase family.</text>
</comment>
<name>GEM1_EMENI</name>
<proteinExistence type="inferred from homology"/>
<keyword id="KW-0106">Calcium</keyword>
<keyword id="KW-0342">GTP-binding</keyword>
<keyword id="KW-0378">Hydrolase</keyword>
<keyword id="KW-0472">Membrane</keyword>
<keyword id="KW-0479">Metal-binding</keyword>
<keyword id="KW-0496">Mitochondrion</keyword>
<keyword id="KW-1000">Mitochondrion outer membrane</keyword>
<keyword id="KW-0547">Nucleotide-binding</keyword>
<keyword id="KW-1185">Reference proteome</keyword>
<keyword id="KW-0677">Repeat</keyword>
<keyword id="KW-0812">Transmembrane</keyword>
<keyword id="KW-1133">Transmembrane helix</keyword>
<dbReference type="EC" id="3.6.5.-"/>
<dbReference type="EMBL" id="AACD01000067">
    <property type="protein sequence ID" value="EAA59428.1"/>
    <property type="molecule type" value="Genomic_DNA"/>
</dbReference>
<dbReference type="EMBL" id="BN001302">
    <property type="protein sequence ID" value="CBF74569.1"/>
    <property type="molecule type" value="Genomic_DNA"/>
</dbReference>
<dbReference type="RefSeq" id="XP_661771.1">
    <property type="nucleotide sequence ID" value="XM_656679.1"/>
</dbReference>
<dbReference type="SMR" id="Q5B5L3"/>
<dbReference type="FunCoup" id="Q5B5L3">
    <property type="interactions" value="783"/>
</dbReference>
<dbReference type="STRING" id="227321.Q5B5L3"/>
<dbReference type="EnsemblFungi" id="CBF74569">
    <property type="protein sequence ID" value="CBF74569"/>
    <property type="gene ID" value="ANIA_04167"/>
</dbReference>
<dbReference type="KEGG" id="ani:ANIA_04167"/>
<dbReference type="eggNOG" id="KOG1707">
    <property type="taxonomic scope" value="Eukaryota"/>
</dbReference>
<dbReference type="HOGENOM" id="CLU_014255_3_0_1"/>
<dbReference type="InParanoid" id="Q5B5L3"/>
<dbReference type="OMA" id="HETTWGI"/>
<dbReference type="OrthoDB" id="10020961at2759"/>
<dbReference type="Proteomes" id="UP000000560">
    <property type="component" value="Chromosome II"/>
</dbReference>
<dbReference type="GO" id="GO:0032865">
    <property type="term" value="C:ERMES complex"/>
    <property type="evidence" value="ECO:0007669"/>
    <property type="project" value="EnsemblFungi"/>
</dbReference>
<dbReference type="GO" id="GO:0005741">
    <property type="term" value="C:mitochondrial outer membrane"/>
    <property type="evidence" value="ECO:0000318"/>
    <property type="project" value="GO_Central"/>
</dbReference>
<dbReference type="GO" id="GO:0005509">
    <property type="term" value="F:calcium ion binding"/>
    <property type="evidence" value="ECO:0007669"/>
    <property type="project" value="EnsemblFungi"/>
</dbReference>
<dbReference type="GO" id="GO:0005525">
    <property type="term" value="F:GTP binding"/>
    <property type="evidence" value="ECO:0000318"/>
    <property type="project" value="GO_Central"/>
</dbReference>
<dbReference type="GO" id="GO:0003924">
    <property type="term" value="F:GTPase activity"/>
    <property type="evidence" value="ECO:0000318"/>
    <property type="project" value="GO_Central"/>
</dbReference>
<dbReference type="GO" id="GO:0015886">
    <property type="term" value="P:heme transport"/>
    <property type="evidence" value="ECO:0007669"/>
    <property type="project" value="EnsemblFungi"/>
</dbReference>
<dbReference type="GO" id="GO:0000001">
    <property type="term" value="P:mitochondrion inheritance"/>
    <property type="evidence" value="ECO:0007669"/>
    <property type="project" value="EnsemblFungi"/>
</dbReference>
<dbReference type="GO" id="GO:0007005">
    <property type="term" value="P:mitochondrion organization"/>
    <property type="evidence" value="ECO:0000318"/>
    <property type="project" value="GO_Central"/>
</dbReference>
<dbReference type="GO" id="GO:1990456">
    <property type="term" value="P:mitochondrion-endoplasmic reticulum membrane tethering"/>
    <property type="evidence" value="ECO:0007669"/>
    <property type="project" value="EnsemblFungi"/>
</dbReference>
<dbReference type="GO" id="GO:0055091">
    <property type="term" value="P:phospholipid homeostasis"/>
    <property type="evidence" value="ECO:0007669"/>
    <property type="project" value="EnsemblFungi"/>
</dbReference>
<dbReference type="GO" id="GO:0010821">
    <property type="term" value="P:regulation of mitochondrion organization"/>
    <property type="evidence" value="ECO:0007669"/>
    <property type="project" value="EnsemblFungi"/>
</dbReference>
<dbReference type="CDD" id="cd01892">
    <property type="entry name" value="Miro2"/>
    <property type="match status" value="1"/>
</dbReference>
<dbReference type="FunFam" id="1.10.238.10:FF:000127">
    <property type="entry name" value="Mitochondrial Rho GTPase"/>
    <property type="match status" value="1"/>
</dbReference>
<dbReference type="FunFam" id="1.10.238.10:FF:000185">
    <property type="entry name" value="Mitochondrial Rho GTPase"/>
    <property type="match status" value="1"/>
</dbReference>
<dbReference type="FunFam" id="3.40.50.300:FF:000572">
    <property type="entry name" value="Mitochondrial Rho GTPase"/>
    <property type="match status" value="1"/>
</dbReference>
<dbReference type="FunFam" id="3.40.50.300:FF:000878">
    <property type="entry name" value="Mitochondrial Rho GTPase"/>
    <property type="match status" value="1"/>
</dbReference>
<dbReference type="Gene3D" id="1.10.238.10">
    <property type="entry name" value="EF-hand"/>
    <property type="match status" value="2"/>
</dbReference>
<dbReference type="Gene3D" id="3.40.50.300">
    <property type="entry name" value="P-loop containing nucleotide triphosphate hydrolases"/>
    <property type="match status" value="2"/>
</dbReference>
<dbReference type="InterPro" id="IPR011992">
    <property type="entry name" value="EF-hand-dom_pair"/>
</dbReference>
<dbReference type="InterPro" id="IPR018247">
    <property type="entry name" value="EF_Hand_1_Ca_BS"/>
</dbReference>
<dbReference type="InterPro" id="IPR013566">
    <property type="entry name" value="EF_hand_assoc_1"/>
</dbReference>
<dbReference type="InterPro" id="IPR013567">
    <property type="entry name" value="EF_hand_assoc_2"/>
</dbReference>
<dbReference type="InterPro" id="IPR002048">
    <property type="entry name" value="EF_hand_dom"/>
</dbReference>
<dbReference type="InterPro" id="IPR021181">
    <property type="entry name" value="Miro"/>
</dbReference>
<dbReference type="InterPro" id="IPR052266">
    <property type="entry name" value="Miro-EF-hand_domain"/>
</dbReference>
<dbReference type="InterPro" id="IPR020860">
    <property type="entry name" value="MIRO_dom"/>
</dbReference>
<dbReference type="InterPro" id="IPR027417">
    <property type="entry name" value="P-loop_NTPase"/>
</dbReference>
<dbReference type="InterPro" id="IPR001806">
    <property type="entry name" value="Small_GTPase"/>
</dbReference>
<dbReference type="PANTHER" id="PTHR46819">
    <property type="entry name" value="EF-HAND CALCIUM-BINDING DOMAIN-CONTAINING PROTEIN 7"/>
    <property type="match status" value="1"/>
</dbReference>
<dbReference type="PANTHER" id="PTHR46819:SF1">
    <property type="entry name" value="EF-HAND CALCIUM-BINDING DOMAIN-CONTAINING PROTEIN 7"/>
    <property type="match status" value="1"/>
</dbReference>
<dbReference type="Pfam" id="PF08355">
    <property type="entry name" value="EF_assoc_1"/>
    <property type="match status" value="1"/>
</dbReference>
<dbReference type="Pfam" id="PF08356">
    <property type="entry name" value="EF_assoc_2"/>
    <property type="match status" value="1"/>
</dbReference>
<dbReference type="Pfam" id="PF00071">
    <property type="entry name" value="Ras"/>
    <property type="match status" value="2"/>
</dbReference>
<dbReference type="PIRSF" id="PIRSF037488">
    <property type="entry name" value="Mt_Rho_GTPase"/>
    <property type="match status" value="1"/>
</dbReference>
<dbReference type="PRINTS" id="PR00449">
    <property type="entry name" value="RASTRNSFRMNG"/>
</dbReference>
<dbReference type="SMART" id="SM00175">
    <property type="entry name" value="RAB"/>
    <property type="match status" value="1"/>
</dbReference>
<dbReference type="SMART" id="SM00173">
    <property type="entry name" value="RAS"/>
    <property type="match status" value="1"/>
</dbReference>
<dbReference type="SMART" id="SM00174">
    <property type="entry name" value="RHO"/>
    <property type="match status" value="1"/>
</dbReference>
<dbReference type="SUPFAM" id="SSF47473">
    <property type="entry name" value="EF-hand"/>
    <property type="match status" value="1"/>
</dbReference>
<dbReference type="SUPFAM" id="SSF52540">
    <property type="entry name" value="P-loop containing nucleoside triphosphate hydrolases"/>
    <property type="match status" value="2"/>
</dbReference>
<dbReference type="PROSITE" id="PS00018">
    <property type="entry name" value="EF_HAND_1"/>
    <property type="match status" value="1"/>
</dbReference>
<dbReference type="PROSITE" id="PS50222">
    <property type="entry name" value="EF_HAND_2"/>
    <property type="match status" value="2"/>
</dbReference>
<dbReference type="PROSITE" id="PS51423">
    <property type="entry name" value="MIRO"/>
    <property type="match status" value="2"/>
</dbReference>
<gene>
    <name type="primary">gem1</name>
    <name type="ORF">AN4167</name>
</gene>
<feature type="chain" id="PRO_0000239335" description="Mitochondrial Rho GTPase 1">
    <location>
        <begin position="1"/>
        <end position="634"/>
    </location>
</feature>
<feature type="topological domain" description="Cytoplasmic" evidence="2">
    <location>
        <begin position="1"/>
        <end position="604"/>
    </location>
</feature>
<feature type="transmembrane region" description="Helical; Anchor for type IV membrane protein" evidence="2">
    <location>
        <begin position="605"/>
        <end position="625"/>
    </location>
</feature>
<feature type="topological domain" description="Mitochondrial intermembrane" evidence="2">
    <location>
        <begin position="626"/>
        <end position="634"/>
    </location>
</feature>
<feature type="domain" description="Miro 1" evidence="4">
    <location>
        <begin position="2"/>
        <end position="171"/>
    </location>
</feature>
<feature type="domain" description="EF-hand 1" evidence="3">
    <location>
        <begin position="187"/>
        <end position="222"/>
    </location>
</feature>
<feature type="domain" description="EF-hand 2" evidence="3">
    <location>
        <begin position="307"/>
        <end position="342"/>
    </location>
</feature>
<feature type="domain" description="Miro 2" evidence="4">
    <location>
        <begin position="423"/>
        <end position="589"/>
    </location>
</feature>
<feature type="region of interest" description="Disordered" evidence="5">
    <location>
        <begin position="399"/>
        <end position="419"/>
    </location>
</feature>
<feature type="compositionally biased region" description="Basic residues" evidence="5">
    <location>
        <begin position="409"/>
        <end position="419"/>
    </location>
</feature>
<feature type="binding site" evidence="2">
    <location>
        <begin position="11"/>
        <end position="18"/>
    </location>
    <ligand>
        <name>GTP</name>
        <dbReference type="ChEBI" id="CHEBI:37565"/>
        <label>1</label>
    </ligand>
</feature>
<feature type="binding site" evidence="2">
    <location>
        <begin position="60"/>
        <end position="64"/>
    </location>
    <ligand>
        <name>GTP</name>
        <dbReference type="ChEBI" id="CHEBI:37565"/>
        <label>1</label>
    </ligand>
</feature>
<feature type="binding site" evidence="2">
    <location>
        <begin position="116"/>
        <end position="119"/>
    </location>
    <ligand>
        <name>GTP</name>
        <dbReference type="ChEBI" id="CHEBI:37565"/>
        <label>1</label>
    </ligand>
</feature>
<feature type="binding site" evidence="3">
    <location>
        <position position="200"/>
    </location>
    <ligand>
        <name>Ca(2+)</name>
        <dbReference type="ChEBI" id="CHEBI:29108"/>
        <label>1</label>
    </ligand>
</feature>
<feature type="binding site" evidence="3">
    <location>
        <position position="202"/>
    </location>
    <ligand>
        <name>Ca(2+)</name>
        <dbReference type="ChEBI" id="CHEBI:29108"/>
        <label>1</label>
    </ligand>
</feature>
<feature type="binding site" evidence="3">
    <location>
        <position position="204"/>
    </location>
    <ligand>
        <name>Ca(2+)</name>
        <dbReference type="ChEBI" id="CHEBI:29108"/>
        <label>1</label>
    </ligand>
</feature>
<feature type="binding site" evidence="3">
    <location>
        <position position="206"/>
    </location>
    <ligand>
        <name>Ca(2+)</name>
        <dbReference type="ChEBI" id="CHEBI:29108"/>
        <label>1</label>
    </ligand>
</feature>
<feature type="binding site" evidence="3">
    <location>
        <position position="211"/>
    </location>
    <ligand>
        <name>Ca(2+)</name>
        <dbReference type="ChEBI" id="CHEBI:29108"/>
        <label>1</label>
    </ligand>
</feature>
<feature type="binding site" evidence="6">
    <location>
        <position position="320"/>
    </location>
    <ligand>
        <name>Ca(2+)</name>
        <dbReference type="ChEBI" id="CHEBI:29108"/>
        <label>2</label>
    </ligand>
</feature>
<feature type="binding site" evidence="6">
    <location>
        <position position="322"/>
    </location>
    <ligand>
        <name>Ca(2+)</name>
        <dbReference type="ChEBI" id="CHEBI:29108"/>
        <label>2</label>
    </ligand>
</feature>
<feature type="binding site" evidence="6">
    <location>
        <position position="324"/>
    </location>
    <ligand>
        <name>Ca(2+)</name>
        <dbReference type="ChEBI" id="CHEBI:29108"/>
        <label>2</label>
    </ligand>
</feature>
<feature type="binding site" evidence="6">
    <location>
        <position position="331"/>
    </location>
    <ligand>
        <name>Ca(2+)</name>
        <dbReference type="ChEBI" id="CHEBI:29108"/>
        <label>2</label>
    </ligand>
</feature>
<feature type="binding site" evidence="2">
    <location>
        <begin position="432"/>
        <end position="439"/>
    </location>
    <ligand>
        <name>GTP</name>
        <dbReference type="ChEBI" id="CHEBI:37565"/>
        <label>2</label>
    </ligand>
</feature>
<feature type="binding site" evidence="2">
    <location>
        <begin position="468"/>
        <end position="472"/>
    </location>
    <ligand>
        <name>GTP</name>
        <dbReference type="ChEBI" id="CHEBI:37565"/>
        <label>2</label>
    </ligand>
</feature>
<feature type="binding site" evidence="2">
    <location>
        <begin position="538"/>
        <end position="541"/>
    </location>
    <ligand>
        <name>GTP</name>
        <dbReference type="ChEBI" id="CHEBI:37565"/>
        <label>2</label>
    </ligand>
</feature>
<accession>Q5B5L3</accession>
<accession>C8V4P6</accession>
<protein>
    <recommendedName>
        <fullName>Mitochondrial Rho GTPase 1</fullName>
        <ecNumber>3.6.5.-</ecNumber>
    </recommendedName>
    <alternativeName>
        <fullName>GTPase EF-hand protein of mitochondria 1</fullName>
    </alternativeName>
</protein>
<sequence length="634" mass="70380">MLCCMRICVCGDEGTGKSSLITSLVKGVFVTNKIQPILPQITIPPTIGTPENVTTTTVVDTSAVPQERSNLAREIRKSNVILLVYSDHYSYERVALFWLPYFRSLGVNVPVVLCANKSDLAADHTETQVIEDEMLPLMSEFKEIDSCIRTSAREHRNVNEAFFLCQKAVTHPIAPLFDAKESALKPAAVAALQRIFYLSDKDRDGYLSDKEIKDFQMRCFEKPLSEEDLVHIKETIQKTHPDSVTPSGIDCRGFIHLNKMYAEKGRHETVWIILRAFQYTDSLSLQESYLHPKFEVPPFASAELSPEGYRFFVNLFLLSDKDNDGGLNDAELASLFAPTPGLPPSWADGSFPSCTVRNEAGHVTLQGWLAQWSMTTFTSPKTTLEYLAYLGFESSDRSNPSTTAALKVTRPRKRRKRPGRVGRNVVLGHIVGAPGSGKSALLDAFLSRGFSTTYHPTIQPRTAVNTVELPGGKQCYLIMDELGELEPAILENQAKLLDQCDVIVYTYDSSDPDSFAYIPALRAKYPHLEELPSVYIALKADLDRTTQRAEHQPHEYTALLNMPGPPLHVSVTWSSIQEVFVHIAEAAMEPSTAFPRSEEDVEGKWMSWGIALGAVVCAGAAAVMIWRRVSGSGV</sequence>
<evidence type="ECO:0000250" key="1">
    <source>
        <dbReference type="UniProtKB" id="P39722"/>
    </source>
</evidence>
<evidence type="ECO:0000255" key="2"/>
<evidence type="ECO:0000255" key="3">
    <source>
        <dbReference type="PROSITE-ProRule" id="PRU00448"/>
    </source>
</evidence>
<evidence type="ECO:0000255" key="4">
    <source>
        <dbReference type="PROSITE-ProRule" id="PRU00757"/>
    </source>
</evidence>
<evidence type="ECO:0000256" key="5">
    <source>
        <dbReference type="SAM" id="MobiDB-lite"/>
    </source>
</evidence>
<evidence type="ECO:0000305" key="6"/>